<keyword id="KW-0238">DNA-binding</keyword>
<keyword id="KW-1185">Reference proteome</keyword>
<keyword id="KW-0804">Transcription</keyword>
<keyword id="KW-0805">Transcription regulation</keyword>
<protein>
    <recommendedName>
        <fullName evidence="1">Transcription elongation factor GreA</fullName>
    </recommendedName>
    <alternativeName>
        <fullName evidence="1">Transcript cleavage factor GreA</fullName>
    </alternativeName>
</protein>
<name>GREA_PSYA2</name>
<dbReference type="EMBL" id="CP000082">
    <property type="protein sequence ID" value="AAZ18666.1"/>
    <property type="molecule type" value="Genomic_DNA"/>
</dbReference>
<dbReference type="RefSeq" id="WP_011280093.1">
    <property type="nucleotide sequence ID" value="NC_007204.1"/>
</dbReference>
<dbReference type="SMR" id="Q4FTJ2"/>
<dbReference type="STRING" id="259536.Psyc_0813"/>
<dbReference type="KEGG" id="par:Psyc_0813"/>
<dbReference type="eggNOG" id="COG0782">
    <property type="taxonomic scope" value="Bacteria"/>
</dbReference>
<dbReference type="HOGENOM" id="CLU_101379_2_0_6"/>
<dbReference type="OrthoDB" id="9808774at2"/>
<dbReference type="Proteomes" id="UP000000546">
    <property type="component" value="Chromosome"/>
</dbReference>
<dbReference type="GO" id="GO:0003677">
    <property type="term" value="F:DNA binding"/>
    <property type="evidence" value="ECO:0007669"/>
    <property type="project" value="UniProtKB-UniRule"/>
</dbReference>
<dbReference type="GO" id="GO:0070063">
    <property type="term" value="F:RNA polymerase binding"/>
    <property type="evidence" value="ECO:0007669"/>
    <property type="project" value="InterPro"/>
</dbReference>
<dbReference type="GO" id="GO:0006354">
    <property type="term" value="P:DNA-templated transcription elongation"/>
    <property type="evidence" value="ECO:0007669"/>
    <property type="project" value="TreeGrafter"/>
</dbReference>
<dbReference type="GO" id="GO:0032784">
    <property type="term" value="P:regulation of DNA-templated transcription elongation"/>
    <property type="evidence" value="ECO:0007669"/>
    <property type="project" value="UniProtKB-UniRule"/>
</dbReference>
<dbReference type="FunFam" id="1.10.287.180:FF:000001">
    <property type="entry name" value="Transcription elongation factor GreA"/>
    <property type="match status" value="1"/>
</dbReference>
<dbReference type="FunFam" id="3.10.50.30:FF:000001">
    <property type="entry name" value="Transcription elongation factor GreA"/>
    <property type="match status" value="1"/>
</dbReference>
<dbReference type="Gene3D" id="3.10.50.30">
    <property type="entry name" value="Transcription elongation factor, GreA/GreB, C-terminal domain"/>
    <property type="match status" value="1"/>
</dbReference>
<dbReference type="Gene3D" id="1.10.287.180">
    <property type="entry name" value="Transcription elongation factor, GreA/GreB, N-terminal domain"/>
    <property type="match status" value="1"/>
</dbReference>
<dbReference type="HAMAP" id="MF_00105">
    <property type="entry name" value="GreA_GreB"/>
    <property type="match status" value="1"/>
</dbReference>
<dbReference type="InterPro" id="IPR036953">
    <property type="entry name" value="GreA/GreB_C_sf"/>
</dbReference>
<dbReference type="InterPro" id="IPR018151">
    <property type="entry name" value="TF_GreA/GreB_CS"/>
</dbReference>
<dbReference type="InterPro" id="IPR006359">
    <property type="entry name" value="Tscrpt_elong_fac_GreA"/>
</dbReference>
<dbReference type="InterPro" id="IPR028624">
    <property type="entry name" value="Tscrpt_elong_fac_GreA/B"/>
</dbReference>
<dbReference type="InterPro" id="IPR001437">
    <property type="entry name" value="Tscrpt_elong_fac_GreA/B_C"/>
</dbReference>
<dbReference type="InterPro" id="IPR023459">
    <property type="entry name" value="Tscrpt_elong_fac_GreA/B_fam"/>
</dbReference>
<dbReference type="InterPro" id="IPR022691">
    <property type="entry name" value="Tscrpt_elong_fac_GreA/B_N"/>
</dbReference>
<dbReference type="InterPro" id="IPR036805">
    <property type="entry name" value="Tscrpt_elong_fac_GreA/B_N_sf"/>
</dbReference>
<dbReference type="NCBIfam" id="TIGR01462">
    <property type="entry name" value="greA"/>
    <property type="match status" value="1"/>
</dbReference>
<dbReference type="NCBIfam" id="NF001261">
    <property type="entry name" value="PRK00226.1-2"/>
    <property type="match status" value="1"/>
</dbReference>
<dbReference type="NCBIfam" id="NF001263">
    <property type="entry name" value="PRK00226.1-4"/>
    <property type="match status" value="1"/>
</dbReference>
<dbReference type="NCBIfam" id="NF001264">
    <property type="entry name" value="PRK00226.1-5"/>
    <property type="match status" value="1"/>
</dbReference>
<dbReference type="PANTHER" id="PTHR30437">
    <property type="entry name" value="TRANSCRIPTION ELONGATION FACTOR GREA"/>
    <property type="match status" value="1"/>
</dbReference>
<dbReference type="PANTHER" id="PTHR30437:SF4">
    <property type="entry name" value="TRANSCRIPTION ELONGATION FACTOR GREA"/>
    <property type="match status" value="1"/>
</dbReference>
<dbReference type="Pfam" id="PF01272">
    <property type="entry name" value="GreA_GreB"/>
    <property type="match status" value="1"/>
</dbReference>
<dbReference type="Pfam" id="PF03449">
    <property type="entry name" value="GreA_GreB_N"/>
    <property type="match status" value="1"/>
</dbReference>
<dbReference type="PIRSF" id="PIRSF006092">
    <property type="entry name" value="GreA_GreB"/>
    <property type="match status" value="1"/>
</dbReference>
<dbReference type="SUPFAM" id="SSF54534">
    <property type="entry name" value="FKBP-like"/>
    <property type="match status" value="1"/>
</dbReference>
<dbReference type="SUPFAM" id="SSF46557">
    <property type="entry name" value="GreA transcript cleavage protein, N-terminal domain"/>
    <property type="match status" value="1"/>
</dbReference>
<dbReference type="PROSITE" id="PS00829">
    <property type="entry name" value="GREAB_1"/>
    <property type="match status" value="1"/>
</dbReference>
<dbReference type="PROSITE" id="PS00830">
    <property type="entry name" value="GREAB_2"/>
    <property type="match status" value="1"/>
</dbReference>
<proteinExistence type="inferred from homology"/>
<accession>Q4FTJ2</accession>
<feature type="chain" id="PRO_1000075882" description="Transcription elongation factor GreA">
    <location>
        <begin position="1"/>
        <end position="158"/>
    </location>
</feature>
<organism>
    <name type="scientific">Psychrobacter arcticus (strain DSM 17307 / VKM B-2377 / 273-4)</name>
    <dbReference type="NCBI Taxonomy" id="259536"/>
    <lineage>
        <taxon>Bacteria</taxon>
        <taxon>Pseudomonadati</taxon>
        <taxon>Pseudomonadota</taxon>
        <taxon>Gammaproteobacteria</taxon>
        <taxon>Moraxellales</taxon>
        <taxon>Moraxellaceae</taxon>
        <taxon>Psychrobacter</taxon>
    </lineage>
</organism>
<reference key="1">
    <citation type="journal article" date="2010" name="Appl. Environ. Microbiol.">
        <title>The genome sequence of Psychrobacter arcticus 273-4, a psychroactive Siberian permafrost bacterium, reveals mechanisms for adaptation to low-temperature growth.</title>
        <authorList>
            <person name="Ayala-del-Rio H.L."/>
            <person name="Chain P.S."/>
            <person name="Grzymski J.J."/>
            <person name="Ponder M.A."/>
            <person name="Ivanova N."/>
            <person name="Bergholz P.W."/>
            <person name="Di Bartolo G."/>
            <person name="Hauser L."/>
            <person name="Land M."/>
            <person name="Bakermans C."/>
            <person name="Rodrigues D."/>
            <person name="Klappenbach J."/>
            <person name="Zarka D."/>
            <person name="Larimer F."/>
            <person name="Richardson P."/>
            <person name="Murray A."/>
            <person name="Thomashow M."/>
            <person name="Tiedje J.M."/>
        </authorList>
    </citation>
    <scope>NUCLEOTIDE SEQUENCE [LARGE SCALE GENOMIC DNA]</scope>
    <source>
        <strain>DSM 17307 / VKM B-2377 / 273-4</strain>
    </source>
</reference>
<gene>
    <name evidence="1" type="primary">greA</name>
    <name type="ordered locus">Psyc_0813</name>
</gene>
<sequence>MQRYPMTPQGHAALEAELKQLKSIDRPRITASIAEAREHGDLKENAEYHAAREQQGFCEARIRDIEAKLGGAQIIDPATLPKDGRVIFGVSVVIENMDTEEEKQYKIVGDDEADFKAGKISVNSPIARGLIGKSEGDEARIETPKGVVEYEIMKVIYD</sequence>
<comment type="function">
    <text evidence="1">Necessary for efficient RNA polymerase transcription elongation past template-encoded arresting sites. The arresting sites in DNA have the property of trapping a certain fraction of elongating RNA polymerases that pass through, resulting in locked ternary complexes. Cleavage of the nascent transcript by cleavage factors such as GreA or GreB allows the resumption of elongation from the new 3'terminus. GreA releases sequences of 2 to 3 nucleotides.</text>
</comment>
<comment type="similarity">
    <text evidence="1">Belongs to the GreA/GreB family.</text>
</comment>
<evidence type="ECO:0000255" key="1">
    <source>
        <dbReference type="HAMAP-Rule" id="MF_00105"/>
    </source>
</evidence>